<gene>
    <name evidence="1" type="primary">petB</name>
</gene>
<organism>
    <name type="scientific">Saccharum officinarum</name>
    <name type="common">Sugarcane</name>
    <dbReference type="NCBI Taxonomy" id="4547"/>
    <lineage>
        <taxon>Eukaryota</taxon>
        <taxon>Viridiplantae</taxon>
        <taxon>Streptophyta</taxon>
        <taxon>Embryophyta</taxon>
        <taxon>Tracheophyta</taxon>
        <taxon>Spermatophyta</taxon>
        <taxon>Magnoliopsida</taxon>
        <taxon>Liliopsida</taxon>
        <taxon>Poales</taxon>
        <taxon>Poaceae</taxon>
        <taxon>PACMAD clade</taxon>
        <taxon>Panicoideae</taxon>
        <taxon>Andropogonodae</taxon>
        <taxon>Andropogoneae</taxon>
        <taxon>Saccharinae</taxon>
        <taxon>Saccharum</taxon>
        <taxon>Saccharum officinarum species complex</taxon>
    </lineage>
</organism>
<protein>
    <recommendedName>
        <fullName evidence="1">Cytochrome b6</fullName>
    </recommendedName>
</protein>
<comment type="function">
    <text evidence="1">Component of the cytochrome b6-f complex, which mediates electron transfer between photosystem II (PSII) and photosystem I (PSI), cyclic electron flow around PSI, and state transitions.</text>
</comment>
<comment type="cofactor">
    <cofactor evidence="1">
        <name>heme b</name>
        <dbReference type="ChEBI" id="CHEBI:60344"/>
    </cofactor>
    <text evidence="1">Binds 2 heme b groups non-covalently with two histidine residues as axial ligands.</text>
</comment>
<comment type="cofactor">
    <cofactor evidence="1">
        <name>heme c</name>
        <dbReference type="ChEBI" id="CHEBI:61717"/>
    </cofactor>
    <text evidence="1">Binds one heme group covalently by a single cysteine link with no axial amino acid ligand. This heme was named heme ci.</text>
</comment>
<comment type="subunit">
    <text evidence="1">The 4 large subunits of the cytochrome b6-f complex are cytochrome b6, subunit IV (17 kDa polypeptide, PetD), cytochrome f and the Rieske protein, while the 4 small subunits are PetG, PetL, PetM and PetN. The complex functions as a dimer.</text>
</comment>
<comment type="subcellular location">
    <subcellularLocation>
        <location evidence="1">Plastid</location>
        <location evidence="1">Chloroplast thylakoid membrane</location>
        <topology evidence="1">Multi-pass membrane protein</topology>
    </subcellularLocation>
</comment>
<comment type="miscellaneous">
    <text evidence="1">Heme 1 (or BH or b566) is high-potential and absorbs at about 566 nm, and heme 2 (or BL or b562) is low-potential and absorbs at about 562 nm.</text>
</comment>
<comment type="similarity">
    <text evidence="1">Belongs to the cytochrome b family. PetB subfamily.</text>
</comment>
<keyword id="KW-0150">Chloroplast</keyword>
<keyword id="KW-0249">Electron transport</keyword>
<keyword id="KW-0349">Heme</keyword>
<keyword id="KW-0408">Iron</keyword>
<keyword id="KW-0472">Membrane</keyword>
<keyword id="KW-0479">Metal-binding</keyword>
<keyword id="KW-0602">Photosynthesis</keyword>
<keyword id="KW-0934">Plastid</keyword>
<keyword id="KW-0793">Thylakoid</keyword>
<keyword id="KW-0812">Transmembrane</keyword>
<keyword id="KW-1133">Transmembrane helix</keyword>
<keyword id="KW-0813">Transport</keyword>
<name>CYB6_SACOF</name>
<dbReference type="EMBL" id="AP006714">
    <property type="protein sequence ID" value="BAD27322.1"/>
    <property type="molecule type" value="Genomic_DNA"/>
</dbReference>
<dbReference type="SMR" id="Q6ENT4"/>
<dbReference type="GO" id="GO:0009535">
    <property type="term" value="C:chloroplast thylakoid membrane"/>
    <property type="evidence" value="ECO:0007669"/>
    <property type="project" value="UniProtKB-SubCell"/>
</dbReference>
<dbReference type="GO" id="GO:0045158">
    <property type="term" value="F:electron transporter, transferring electrons within cytochrome b6/f complex of photosystem II activity"/>
    <property type="evidence" value="ECO:0007669"/>
    <property type="project" value="UniProtKB-UniRule"/>
</dbReference>
<dbReference type="GO" id="GO:0046872">
    <property type="term" value="F:metal ion binding"/>
    <property type="evidence" value="ECO:0007669"/>
    <property type="project" value="UniProtKB-KW"/>
</dbReference>
<dbReference type="GO" id="GO:0016491">
    <property type="term" value="F:oxidoreductase activity"/>
    <property type="evidence" value="ECO:0007669"/>
    <property type="project" value="InterPro"/>
</dbReference>
<dbReference type="GO" id="GO:0015979">
    <property type="term" value="P:photosynthesis"/>
    <property type="evidence" value="ECO:0007669"/>
    <property type="project" value="UniProtKB-UniRule"/>
</dbReference>
<dbReference type="GO" id="GO:0022904">
    <property type="term" value="P:respiratory electron transport chain"/>
    <property type="evidence" value="ECO:0007669"/>
    <property type="project" value="InterPro"/>
</dbReference>
<dbReference type="CDD" id="cd00284">
    <property type="entry name" value="Cytochrome_b_N"/>
    <property type="match status" value="1"/>
</dbReference>
<dbReference type="FunFam" id="1.20.810.10:FF:000001">
    <property type="entry name" value="Cytochrome b6"/>
    <property type="match status" value="1"/>
</dbReference>
<dbReference type="Gene3D" id="1.20.810.10">
    <property type="entry name" value="Cytochrome Bc1 Complex, Chain C"/>
    <property type="match status" value="1"/>
</dbReference>
<dbReference type="HAMAP" id="MF_00633">
    <property type="entry name" value="Cytb6_f_cytb6"/>
    <property type="match status" value="1"/>
</dbReference>
<dbReference type="InterPro" id="IPR005797">
    <property type="entry name" value="Cyt_b/b6_N"/>
</dbReference>
<dbReference type="InterPro" id="IPR023530">
    <property type="entry name" value="Cyt_B6_PetB"/>
</dbReference>
<dbReference type="InterPro" id="IPR027387">
    <property type="entry name" value="Cytb/b6-like_sf"/>
</dbReference>
<dbReference type="InterPro" id="IPR048259">
    <property type="entry name" value="Cytochrome_b_N_euk/bac"/>
</dbReference>
<dbReference type="InterPro" id="IPR016174">
    <property type="entry name" value="Di-haem_cyt_TM"/>
</dbReference>
<dbReference type="NCBIfam" id="NF002990">
    <property type="entry name" value="PRK03735.1"/>
    <property type="match status" value="1"/>
</dbReference>
<dbReference type="PANTHER" id="PTHR19271">
    <property type="entry name" value="CYTOCHROME B"/>
    <property type="match status" value="1"/>
</dbReference>
<dbReference type="PANTHER" id="PTHR19271:SF16">
    <property type="entry name" value="CYTOCHROME B"/>
    <property type="match status" value="1"/>
</dbReference>
<dbReference type="Pfam" id="PF00033">
    <property type="entry name" value="Cytochrome_B"/>
    <property type="match status" value="1"/>
</dbReference>
<dbReference type="PIRSF" id="PIRSF000032">
    <property type="entry name" value="Cytochrome_b6"/>
    <property type="match status" value="1"/>
</dbReference>
<dbReference type="SUPFAM" id="SSF81342">
    <property type="entry name" value="Transmembrane di-heme cytochromes"/>
    <property type="match status" value="1"/>
</dbReference>
<dbReference type="PROSITE" id="PS51002">
    <property type="entry name" value="CYTB_NTER"/>
    <property type="match status" value="1"/>
</dbReference>
<geneLocation type="chloroplast"/>
<accession>Q6ENT4</accession>
<evidence type="ECO:0000255" key="1">
    <source>
        <dbReference type="HAMAP-Rule" id="MF_00633"/>
    </source>
</evidence>
<sequence>MSKVYDWFEERLEIQAIADDITSKYVPPHVNIFYCLGGITLTCFLVQVATGFAMTFYYRPTVTEAFSSVQYIMTEANFGWLIRSVHRWSASMMVLMMILHVFRVYLTGGFKKPRELTWVTGVVLAVLTASFGVTGYSLPWDQIGYWAVKIVTGVPEAIPVIGSPLVELLRGSASVGQSTLTRFYSLHTFVLPLLTAVFMLMHFPMIRKQGISGPL</sequence>
<reference key="1">
    <citation type="journal article" date="2004" name="DNA Res.">
        <title>Complete nucleotide sequence of the sugarcane (Saccharum officinarum) chloroplast genome: a comparative analysis of four monocot chloroplast genomes.</title>
        <authorList>
            <person name="Asano T."/>
            <person name="Tsudzuki T."/>
            <person name="Takahashi S."/>
            <person name="Shimada H."/>
            <person name="Kadowaki K."/>
        </authorList>
    </citation>
    <scope>NUCLEOTIDE SEQUENCE [LARGE SCALE GENOMIC DNA]</scope>
</reference>
<feature type="chain" id="PRO_0000061818" description="Cytochrome b6">
    <location>
        <begin position="1"/>
        <end position="215"/>
    </location>
</feature>
<feature type="transmembrane region" description="Helical" evidence="1">
    <location>
        <begin position="32"/>
        <end position="52"/>
    </location>
</feature>
<feature type="transmembrane region" description="Helical" evidence="1">
    <location>
        <begin position="90"/>
        <end position="110"/>
    </location>
</feature>
<feature type="transmembrane region" description="Helical" evidence="1">
    <location>
        <begin position="116"/>
        <end position="136"/>
    </location>
</feature>
<feature type="transmembrane region" description="Helical" evidence="1">
    <location>
        <begin position="186"/>
        <end position="206"/>
    </location>
</feature>
<feature type="binding site" description="covalent" evidence="1">
    <location>
        <position position="35"/>
    </location>
    <ligand>
        <name>heme c</name>
        <dbReference type="ChEBI" id="CHEBI:61717"/>
    </ligand>
</feature>
<feature type="binding site" description="axial binding residue" evidence="1">
    <location>
        <position position="86"/>
    </location>
    <ligand>
        <name>heme b</name>
        <dbReference type="ChEBI" id="CHEBI:60344"/>
        <label>2</label>
    </ligand>
    <ligandPart>
        <name>Fe</name>
        <dbReference type="ChEBI" id="CHEBI:18248"/>
    </ligandPart>
</feature>
<feature type="binding site" description="axial binding residue" evidence="1">
    <location>
        <position position="100"/>
    </location>
    <ligand>
        <name>heme b</name>
        <dbReference type="ChEBI" id="CHEBI:60344"/>
        <label>1</label>
    </ligand>
    <ligandPart>
        <name>Fe</name>
        <dbReference type="ChEBI" id="CHEBI:18248"/>
    </ligandPart>
</feature>
<feature type="binding site" description="axial binding residue" evidence="1">
    <location>
        <position position="187"/>
    </location>
    <ligand>
        <name>heme b</name>
        <dbReference type="ChEBI" id="CHEBI:60344"/>
        <label>2</label>
    </ligand>
    <ligandPart>
        <name>Fe</name>
        <dbReference type="ChEBI" id="CHEBI:18248"/>
    </ligandPart>
</feature>
<feature type="binding site" description="axial binding residue" evidence="1">
    <location>
        <position position="202"/>
    </location>
    <ligand>
        <name>heme b</name>
        <dbReference type="ChEBI" id="CHEBI:60344"/>
        <label>1</label>
    </ligand>
    <ligandPart>
        <name>Fe</name>
        <dbReference type="ChEBI" id="CHEBI:18248"/>
    </ligandPart>
</feature>
<proteinExistence type="inferred from homology"/>